<gene>
    <name evidence="1" type="primary">rps4e</name>
    <name type="ordered locus">Cmaq_1832</name>
</gene>
<sequence length="237" mass="27067">MTHLRRSTSPEWWPVERKGAPWSIKPSPGPHPANSSIPLAVLLRDVFHYAKTLREARLIIGKGYVKVDGKVRRDYKYPVGLMDVIELTPINEYYRIIPDPVNFLRPIRIDKSEAGVKVCRIEDKTMVKAGKIQLNLHDGRNIIVDQDEGRKYETLGSVVVNLEDGKLMDYYPMQPNQYVIAFNGVNVGRHGTLINWVRSFRKRDAIATVKAKDSEFRTVLNYLLVIGKESPVVKVTE</sequence>
<organism>
    <name type="scientific">Caldivirga maquilingensis (strain ATCC 700844 / DSM 13496 / JCM 10307 / IC-167)</name>
    <dbReference type="NCBI Taxonomy" id="397948"/>
    <lineage>
        <taxon>Archaea</taxon>
        <taxon>Thermoproteota</taxon>
        <taxon>Thermoprotei</taxon>
        <taxon>Thermoproteales</taxon>
        <taxon>Thermoproteaceae</taxon>
        <taxon>Caldivirga</taxon>
    </lineage>
</organism>
<proteinExistence type="inferred from homology"/>
<feature type="chain" id="PRO_1000081333" description="Small ribosomal subunit protein eS4">
    <location>
        <begin position="1"/>
        <end position="237"/>
    </location>
</feature>
<feature type="domain" description="S4 RNA-binding" evidence="1">
    <location>
        <begin position="37"/>
        <end position="100"/>
    </location>
</feature>
<keyword id="KW-1185">Reference proteome</keyword>
<keyword id="KW-0687">Ribonucleoprotein</keyword>
<keyword id="KW-0689">Ribosomal protein</keyword>
<keyword id="KW-0694">RNA-binding</keyword>
<keyword id="KW-0699">rRNA-binding</keyword>
<dbReference type="EMBL" id="CP000852">
    <property type="protein sequence ID" value="ABW02649.1"/>
    <property type="molecule type" value="Genomic_DNA"/>
</dbReference>
<dbReference type="RefSeq" id="WP_012186868.1">
    <property type="nucleotide sequence ID" value="NC_009954.1"/>
</dbReference>
<dbReference type="SMR" id="A8MB20"/>
<dbReference type="STRING" id="397948.Cmaq_1832"/>
<dbReference type="GeneID" id="5710084"/>
<dbReference type="KEGG" id="cma:Cmaq_1832"/>
<dbReference type="eggNOG" id="arCOG04093">
    <property type="taxonomic scope" value="Archaea"/>
</dbReference>
<dbReference type="HOGENOM" id="CLU_060400_0_0_2"/>
<dbReference type="OrthoDB" id="372073at2157"/>
<dbReference type="Proteomes" id="UP000001137">
    <property type="component" value="Chromosome"/>
</dbReference>
<dbReference type="GO" id="GO:0022627">
    <property type="term" value="C:cytosolic small ribosomal subunit"/>
    <property type="evidence" value="ECO:0007669"/>
    <property type="project" value="TreeGrafter"/>
</dbReference>
<dbReference type="GO" id="GO:0019843">
    <property type="term" value="F:rRNA binding"/>
    <property type="evidence" value="ECO:0007669"/>
    <property type="project" value="UniProtKB-KW"/>
</dbReference>
<dbReference type="GO" id="GO:0003735">
    <property type="term" value="F:structural constituent of ribosome"/>
    <property type="evidence" value="ECO:0007669"/>
    <property type="project" value="InterPro"/>
</dbReference>
<dbReference type="GO" id="GO:0006412">
    <property type="term" value="P:translation"/>
    <property type="evidence" value="ECO:0007669"/>
    <property type="project" value="UniProtKB-UniRule"/>
</dbReference>
<dbReference type="CDD" id="cd06087">
    <property type="entry name" value="KOW_RPS4"/>
    <property type="match status" value="1"/>
</dbReference>
<dbReference type="CDD" id="cd00165">
    <property type="entry name" value="S4"/>
    <property type="match status" value="1"/>
</dbReference>
<dbReference type="FunFam" id="3.10.290.10:FF:000002">
    <property type="entry name" value="40S ribosomal protein S4"/>
    <property type="match status" value="1"/>
</dbReference>
<dbReference type="Gene3D" id="2.30.30.30">
    <property type="match status" value="1"/>
</dbReference>
<dbReference type="Gene3D" id="2.40.50.740">
    <property type="match status" value="1"/>
</dbReference>
<dbReference type="Gene3D" id="3.10.290.10">
    <property type="entry name" value="RNA-binding S4 domain"/>
    <property type="match status" value="1"/>
</dbReference>
<dbReference type="HAMAP" id="MF_00485">
    <property type="entry name" value="Ribosomal_eS4"/>
    <property type="match status" value="1"/>
</dbReference>
<dbReference type="InterPro" id="IPR014722">
    <property type="entry name" value="Rib_uL2_dom2"/>
</dbReference>
<dbReference type="InterPro" id="IPR000876">
    <property type="entry name" value="Ribosomal_eS4"/>
</dbReference>
<dbReference type="InterPro" id="IPR013845">
    <property type="entry name" value="Ribosomal_eS4_central_region"/>
</dbReference>
<dbReference type="InterPro" id="IPR038237">
    <property type="entry name" value="Ribosomal_eS4_central_sf"/>
</dbReference>
<dbReference type="InterPro" id="IPR041982">
    <property type="entry name" value="Ribosomal_eS4_KOW"/>
</dbReference>
<dbReference type="InterPro" id="IPR013843">
    <property type="entry name" value="Ribosomal_eS4_N"/>
</dbReference>
<dbReference type="InterPro" id="IPR002942">
    <property type="entry name" value="S4_RNA-bd"/>
</dbReference>
<dbReference type="InterPro" id="IPR036986">
    <property type="entry name" value="S4_RNA-bd_sf"/>
</dbReference>
<dbReference type="NCBIfam" id="NF003312">
    <property type="entry name" value="PRK04313.1"/>
    <property type="match status" value="1"/>
</dbReference>
<dbReference type="PANTHER" id="PTHR11581">
    <property type="entry name" value="30S/40S RIBOSOMAL PROTEIN S4"/>
    <property type="match status" value="1"/>
</dbReference>
<dbReference type="PANTHER" id="PTHR11581:SF0">
    <property type="entry name" value="SMALL RIBOSOMAL SUBUNIT PROTEIN ES4"/>
    <property type="match status" value="1"/>
</dbReference>
<dbReference type="Pfam" id="PF00900">
    <property type="entry name" value="Ribosomal_S4e"/>
    <property type="match status" value="1"/>
</dbReference>
<dbReference type="Pfam" id="PF08071">
    <property type="entry name" value="RS4NT"/>
    <property type="match status" value="1"/>
</dbReference>
<dbReference type="Pfam" id="PF01479">
    <property type="entry name" value="S4"/>
    <property type="match status" value="1"/>
</dbReference>
<dbReference type="PIRSF" id="PIRSF002116">
    <property type="entry name" value="Ribosomal_S4"/>
    <property type="match status" value="1"/>
</dbReference>
<dbReference type="SMART" id="SM00363">
    <property type="entry name" value="S4"/>
    <property type="match status" value="1"/>
</dbReference>
<dbReference type="SUPFAM" id="SSF55174">
    <property type="entry name" value="Alpha-L RNA-binding motif"/>
    <property type="match status" value="1"/>
</dbReference>
<dbReference type="PROSITE" id="PS50889">
    <property type="entry name" value="S4"/>
    <property type="match status" value="1"/>
</dbReference>
<comment type="similarity">
    <text evidence="1">Belongs to the eukaryotic ribosomal protein eS4 family.</text>
</comment>
<accession>A8MB20</accession>
<protein>
    <recommendedName>
        <fullName evidence="1">Small ribosomal subunit protein eS4</fullName>
    </recommendedName>
    <alternativeName>
        <fullName evidence="2">30S ribosomal protein S4e</fullName>
    </alternativeName>
</protein>
<name>RS4E_CALMQ</name>
<evidence type="ECO:0000255" key="1">
    <source>
        <dbReference type="HAMAP-Rule" id="MF_00485"/>
    </source>
</evidence>
<evidence type="ECO:0000305" key="2"/>
<reference key="1">
    <citation type="submission" date="2007-10" db="EMBL/GenBank/DDBJ databases">
        <title>Complete sequence of Caldivirga maquilingensis IC-167.</title>
        <authorList>
            <consortium name="US DOE Joint Genome Institute"/>
            <person name="Copeland A."/>
            <person name="Lucas S."/>
            <person name="Lapidus A."/>
            <person name="Barry K."/>
            <person name="Glavina del Rio T."/>
            <person name="Dalin E."/>
            <person name="Tice H."/>
            <person name="Pitluck S."/>
            <person name="Saunders E."/>
            <person name="Brettin T."/>
            <person name="Bruce D."/>
            <person name="Detter J.C."/>
            <person name="Han C."/>
            <person name="Schmutz J."/>
            <person name="Larimer F."/>
            <person name="Land M."/>
            <person name="Hauser L."/>
            <person name="Kyrpides N."/>
            <person name="Ivanova N."/>
            <person name="Biddle J.F."/>
            <person name="Zhang Z."/>
            <person name="Fitz-Gibbon S.T."/>
            <person name="Lowe T.M."/>
            <person name="Saltikov C."/>
            <person name="House C.H."/>
            <person name="Richardson P."/>
        </authorList>
    </citation>
    <scope>NUCLEOTIDE SEQUENCE [LARGE SCALE GENOMIC DNA]</scope>
    <source>
        <strain>ATCC 700844 / DSM 13496 / JCM 10307 / IC-167</strain>
    </source>
</reference>